<comment type="function">
    <text evidence="1">Usually encoded in the trnK tRNA gene intron. Probably assists in splicing its own and other chloroplast group II introns.</text>
</comment>
<comment type="subcellular location">
    <subcellularLocation>
        <location>Plastid</location>
        <location>Chloroplast</location>
    </subcellularLocation>
</comment>
<comment type="similarity">
    <text evidence="1">Belongs to the intron maturase 2 family. MatK subfamily.</text>
</comment>
<evidence type="ECO:0000255" key="1">
    <source>
        <dbReference type="HAMAP-Rule" id="MF_01390"/>
    </source>
</evidence>
<proteinExistence type="inferred from homology"/>
<organism>
    <name type="scientific">Lens ervoides</name>
    <name type="common">Beaded lentil</name>
    <name type="synonym">Cicer ervoides</name>
    <dbReference type="NCBI Taxonomy" id="41257"/>
    <lineage>
        <taxon>Eukaryota</taxon>
        <taxon>Viridiplantae</taxon>
        <taxon>Streptophyta</taxon>
        <taxon>Embryophyta</taxon>
        <taxon>Tracheophyta</taxon>
        <taxon>Spermatophyta</taxon>
        <taxon>Magnoliopsida</taxon>
        <taxon>eudicotyledons</taxon>
        <taxon>Gunneridae</taxon>
        <taxon>Pentapetalae</taxon>
        <taxon>rosids</taxon>
        <taxon>fabids</taxon>
        <taxon>Fabales</taxon>
        <taxon>Fabaceae</taxon>
        <taxon>Papilionoideae</taxon>
        <taxon>50 kb inversion clade</taxon>
        <taxon>NPAAA clade</taxon>
        <taxon>Hologalegina</taxon>
        <taxon>IRL clade</taxon>
        <taxon>Fabeae</taxon>
        <taxon>Lens</taxon>
    </lineage>
</organism>
<feature type="chain" id="PRO_0000143470" description="Maturase K">
    <location>
        <begin position="1"/>
        <end position="507"/>
    </location>
</feature>
<geneLocation type="chloroplast"/>
<sequence length="507" mass="60977">MKESQVYLERARSRQQHFLYSLIFREYIYGLAYSHNLNRSLFVENVGYDNKYSLLIVKRLITRMYQQNHLIISANDSNKNSFWGYNNNYYSQIISEGFSIVVEIPFFLQLSSSLEEAEIIKYYKNFRSIHSIFPFLEDKFTYLNYVSDIRIPYPIHLEILVQILRYWVKDAPFFHLLRLFLCNWNSFITTKNKKSISTFSKINPRFFLFLYNFYVCEYESIFVFLRNQSSHLPLKSFRVFFERIFFYAKREHLVKLFAKDFLYTLTLTFFKDPNIHYVRYQGKCILASKNAPFLMDKWKHYFIHLWQCFFDVWSQPRTININPLSEHSFKLLGYFSNVRLNRSVVRSQMLQNTFLIEIVIKKIDIIVPILPLIRSLAKAKFCNVLGQPISKPVWADSSDFDIIDRFLRISRNLSHYYKGSSKKKSLYRIKYILRLSCIKTLACKHKSTVRAFLKRSGSEEFLQEFFTEEEEILSLIFPRDSSTLERLSRNRIWYLDILFSNDLVHDE</sequence>
<name>MATK_LENER</name>
<accession>Q8MCR5</accession>
<gene>
    <name evidence="1" type="primary">matK</name>
</gene>
<reference key="1">
    <citation type="book" date="2003" name="Advances in legume systematics - part 10">
        <title>Phylogenetic analyses of tribes Trifolieae and Vicieae based on sequences of the plastid gene matK (Papilionoideae: Leguminosae).</title>
        <editorList>
            <person name="Klitgaard B.B."/>
            <person name="Bruneau A."/>
        </editorList>
        <authorList>
            <person name="Steele K.P."/>
            <person name="Wojciechowski M.F."/>
        </authorList>
    </citation>
    <scope>NUCLEOTIDE SEQUENCE [GENOMIC DNA]</scope>
</reference>
<dbReference type="EMBL" id="AF522090">
    <property type="protein sequence ID" value="AAM82082.1"/>
    <property type="molecule type" value="Genomic_DNA"/>
</dbReference>
<dbReference type="GO" id="GO:0009507">
    <property type="term" value="C:chloroplast"/>
    <property type="evidence" value="ECO:0007669"/>
    <property type="project" value="UniProtKB-SubCell"/>
</dbReference>
<dbReference type="GO" id="GO:0003723">
    <property type="term" value="F:RNA binding"/>
    <property type="evidence" value="ECO:0007669"/>
    <property type="project" value="UniProtKB-KW"/>
</dbReference>
<dbReference type="GO" id="GO:0006397">
    <property type="term" value="P:mRNA processing"/>
    <property type="evidence" value="ECO:0007669"/>
    <property type="project" value="UniProtKB-KW"/>
</dbReference>
<dbReference type="GO" id="GO:0008380">
    <property type="term" value="P:RNA splicing"/>
    <property type="evidence" value="ECO:0007669"/>
    <property type="project" value="UniProtKB-UniRule"/>
</dbReference>
<dbReference type="GO" id="GO:0008033">
    <property type="term" value="P:tRNA processing"/>
    <property type="evidence" value="ECO:0007669"/>
    <property type="project" value="UniProtKB-KW"/>
</dbReference>
<dbReference type="HAMAP" id="MF_01390">
    <property type="entry name" value="MatK"/>
    <property type="match status" value="1"/>
</dbReference>
<dbReference type="InterPro" id="IPR024937">
    <property type="entry name" value="Domain_X"/>
</dbReference>
<dbReference type="InterPro" id="IPR002866">
    <property type="entry name" value="Maturase_MatK"/>
</dbReference>
<dbReference type="InterPro" id="IPR024942">
    <property type="entry name" value="Maturase_MatK_N"/>
</dbReference>
<dbReference type="PANTHER" id="PTHR34811">
    <property type="entry name" value="MATURASE K"/>
    <property type="match status" value="1"/>
</dbReference>
<dbReference type="PANTHER" id="PTHR34811:SF1">
    <property type="entry name" value="MATURASE K"/>
    <property type="match status" value="1"/>
</dbReference>
<dbReference type="Pfam" id="PF01348">
    <property type="entry name" value="Intron_maturas2"/>
    <property type="match status" value="1"/>
</dbReference>
<dbReference type="Pfam" id="PF01824">
    <property type="entry name" value="MatK_N"/>
    <property type="match status" value="1"/>
</dbReference>
<keyword id="KW-0150">Chloroplast</keyword>
<keyword id="KW-0507">mRNA processing</keyword>
<keyword id="KW-0934">Plastid</keyword>
<keyword id="KW-0694">RNA-binding</keyword>
<keyword id="KW-0819">tRNA processing</keyword>
<protein>
    <recommendedName>
        <fullName evidence="1">Maturase K</fullName>
    </recommendedName>
    <alternativeName>
        <fullName evidence="1">Intron maturase</fullName>
    </alternativeName>
</protein>